<comment type="function">
    <text evidence="2 3 4">Forms multiple COMPASS-like complexes involved in histone methylation by interacting with different histone H3 'Lys-4' methyltransferases such as ATX1, SDG14 or SDG16 (PubMed:21423667). Binds to target loci chromatin, increasing H3K4 trimethylation and causing activation of the gene (PubMed:19567704). Up-regulates FLC and MAF4 expression to delay flowering (PubMed:19567704). Present at the promoters and at the transcription start sites (TSS) regions of WRKY70 and LTP7; this occupancy is ATX1-dependent (PubMed:23284292). Involved in the transition from transcription initiation to transcription elongation (PubMed:23284292).</text>
</comment>
<comment type="subunit">
    <text evidence="2 3 4">Part of a complex composed of TRO, RBL and WDR5A (PubMed:21423667). This complex is formed during both vegetative and reproductive development (PubMed:21423667). Interacts with SDG14, SDG16, RBL, but not with TRO (PubMed:21423667). Interacts with ATX1 and K4-methylated H3 tails (PubMed:19567704).</text>
</comment>
<comment type="subcellular location">
    <subcellularLocation>
        <location evidence="2 3">Nucleus</location>
    </subcellularLocation>
</comment>
<comment type="tissue specificity">
    <text evidence="2 3">Strongly expressed in developing embryos and endosperms (PubMed:21423667). Expressed in shoot and root apical regions, and in vasculature (PubMed:19567704).</text>
</comment>
<comment type="disruption phenotype">
    <text evidence="4">Eearly flowering (PubMed:23284292). Decreased TATA-binding protein (TBP) levels lower Ser5P Pol II levels near the transcription start sites (TSSs) of target genes and of Pol II at the genes 3'-ends thus affecting the transition from transcription initiation to transcription elongation (PubMed:23284292). Significantly reduced trimethylated 'Lys-4' of histone H3 (H3K4me3) levels at the 5'-ends of WRKY70 and LTP7 genes leading to reduced transcript accumulation (PubMed:23284292).</text>
</comment>
<protein>
    <recommendedName>
        <fullName evidence="5">COMPASS-like H3K4 histone methylase component WDR5A</fullName>
        <shortName evidence="5">AtWDR5A</shortName>
    </recommendedName>
</protein>
<sequence length="317" mass="34820">MAEEIPATASFTPYVHSQTLTSHNRAVSSVKFSSDGRLLASASADKTIRTYTINTINDPIAEPVQEFTGHENGISDVAFSSDARFIVSASDDKTLKLWDVETGSLIKTLIGHTNYAFCVNFNPQSNMIVSGSFDETVRIWDVTTGKCLKVLPAHSDPVTAVDFNRDGSLIVSSSYDGLCRIWDSGTGHCVKTLIDDENPPVSFVRFSPNGKFILVGTLDNTLRLWNISSAKFLKTYTGHVNAQYCISSAFSVTNGKRIVSGSEDNCVHMWELNSKKLLQKLEGHTETVMNVACHPTENLIASGSLDKTVRIWTQKKE</sequence>
<name>WDR5A_ARATH</name>
<reference key="1">
    <citation type="journal article" date="2000" name="Nature">
        <title>Sequence and analysis of chromosome 3 of the plant Arabidopsis thaliana.</title>
        <authorList>
            <person name="Salanoubat M."/>
            <person name="Lemcke K."/>
            <person name="Rieger M."/>
            <person name="Ansorge W."/>
            <person name="Unseld M."/>
            <person name="Fartmann B."/>
            <person name="Valle G."/>
            <person name="Bloecker H."/>
            <person name="Perez-Alonso M."/>
            <person name="Obermaier B."/>
            <person name="Delseny M."/>
            <person name="Boutry M."/>
            <person name="Grivell L.A."/>
            <person name="Mache R."/>
            <person name="Puigdomenech P."/>
            <person name="De Simone V."/>
            <person name="Choisne N."/>
            <person name="Artiguenave F."/>
            <person name="Robert C."/>
            <person name="Brottier P."/>
            <person name="Wincker P."/>
            <person name="Cattolico L."/>
            <person name="Weissenbach J."/>
            <person name="Saurin W."/>
            <person name="Quetier F."/>
            <person name="Schaefer M."/>
            <person name="Mueller-Auer S."/>
            <person name="Gabel C."/>
            <person name="Fuchs M."/>
            <person name="Benes V."/>
            <person name="Wurmbach E."/>
            <person name="Drzonek H."/>
            <person name="Erfle H."/>
            <person name="Jordan N."/>
            <person name="Bangert S."/>
            <person name="Wiedelmann R."/>
            <person name="Kranz H."/>
            <person name="Voss H."/>
            <person name="Holland R."/>
            <person name="Brandt P."/>
            <person name="Nyakatura G."/>
            <person name="Vezzi A."/>
            <person name="D'Angelo M."/>
            <person name="Pallavicini A."/>
            <person name="Toppo S."/>
            <person name="Simionati B."/>
            <person name="Conrad A."/>
            <person name="Hornischer K."/>
            <person name="Kauer G."/>
            <person name="Loehnert T.-H."/>
            <person name="Nordsiek G."/>
            <person name="Reichelt J."/>
            <person name="Scharfe M."/>
            <person name="Schoen O."/>
            <person name="Bargues M."/>
            <person name="Terol J."/>
            <person name="Climent J."/>
            <person name="Navarro P."/>
            <person name="Collado C."/>
            <person name="Perez-Perez A."/>
            <person name="Ottenwaelder B."/>
            <person name="Duchemin D."/>
            <person name="Cooke R."/>
            <person name="Laudie M."/>
            <person name="Berger-Llauro C."/>
            <person name="Purnelle B."/>
            <person name="Masuy D."/>
            <person name="de Haan M."/>
            <person name="Maarse A.C."/>
            <person name="Alcaraz J.-P."/>
            <person name="Cottet A."/>
            <person name="Casacuberta E."/>
            <person name="Monfort A."/>
            <person name="Argiriou A."/>
            <person name="Flores M."/>
            <person name="Liguori R."/>
            <person name="Vitale D."/>
            <person name="Mannhaupt G."/>
            <person name="Haase D."/>
            <person name="Schoof H."/>
            <person name="Rudd S."/>
            <person name="Zaccaria P."/>
            <person name="Mewes H.-W."/>
            <person name="Mayer K.F.X."/>
            <person name="Kaul S."/>
            <person name="Town C.D."/>
            <person name="Koo H.L."/>
            <person name="Tallon L.J."/>
            <person name="Jenkins J."/>
            <person name="Rooney T."/>
            <person name="Rizzo M."/>
            <person name="Walts A."/>
            <person name="Utterback T."/>
            <person name="Fujii C.Y."/>
            <person name="Shea T.P."/>
            <person name="Creasy T.H."/>
            <person name="Haas B."/>
            <person name="Maiti R."/>
            <person name="Wu D."/>
            <person name="Peterson J."/>
            <person name="Van Aken S."/>
            <person name="Pai G."/>
            <person name="Militscher J."/>
            <person name="Sellers P."/>
            <person name="Gill J.E."/>
            <person name="Feldblyum T.V."/>
            <person name="Preuss D."/>
            <person name="Lin X."/>
            <person name="Nierman W.C."/>
            <person name="Salzberg S.L."/>
            <person name="White O."/>
            <person name="Venter J.C."/>
            <person name="Fraser C.M."/>
            <person name="Kaneko T."/>
            <person name="Nakamura Y."/>
            <person name="Sato S."/>
            <person name="Kato T."/>
            <person name="Asamizu E."/>
            <person name="Sasamoto S."/>
            <person name="Kimura T."/>
            <person name="Idesawa K."/>
            <person name="Kawashima K."/>
            <person name="Kishida Y."/>
            <person name="Kiyokawa C."/>
            <person name="Kohara M."/>
            <person name="Matsumoto M."/>
            <person name="Matsuno A."/>
            <person name="Muraki A."/>
            <person name="Nakayama S."/>
            <person name="Nakazaki N."/>
            <person name="Shinpo S."/>
            <person name="Takeuchi C."/>
            <person name="Wada T."/>
            <person name="Watanabe A."/>
            <person name="Yamada M."/>
            <person name="Yasuda M."/>
            <person name="Tabata S."/>
        </authorList>
    </citation>
    <scope>NUCLEOTIDE SEQUENCE [LARGE SCALE GENOMIC DNA]</scope>
    <source>
        <strain>cv. Columbia</strain>
    </source>
</reference>
<reference key="2">
    <citation type="journal article" date="2017" name="Plant J.">
        <title>Araport11: a complete reannotation of the Arabidopsis thaliana reference genome.</title>
        <authorList>
            <person name="Cheng C.Y."/>
            <person name="Krishnakumar V."/>
            <person name="Chan A.P."/>
            <person name="Thibaud-Nissen F."/>
            <person name="Schobel S."/>
            <person name="Town C.D."/>
        </authorList>
    </citation>
    <scope>GENOME REANNOTATION</scope>
    <source>
        <strain>cv. Columbia</strain>
    </source>
</reference>
<reference key="3">
    <citation type="journal article" date="2009" name="Plant Cell">
        <title>Establishment of the winter-annual growth habit via FRIGIDA-mediated histone methylation at FLOWERING LOCUS C in Arabidopsis.</title>
        <authorList>
            <person name="Jiang D."/>
            <person name="Gu X."/>
            <person name="He Y."/>
        </authorList>
    </citation>
    <scope>FUNCTION</scope>
    <scope>SUBCELLULAR LOCATION</scope>
    <scope>TISSUE SPECIFICITY</scope>
    <scope>INTERACTION WITH HISTONE H3 AND ATX1</scope>
</reference>
<reference key="4">
    <citation type="journal article" date="2011" name="PLoS Genet.">
        <title>Arabidopsis COMPASS-like complexes mediate histone H3 lysine-4 trimethylation to control floral transition and plant development.</title>
        <authorList>
            <person name="Jiang D."/>
            <person name="Kong N.C."/>
            <person name="Gu X."/>
            <person name="Li Z."/>
            <person name="He Y."/>
        </authorList>
    </citation>
    <scope>FUNCTION</scope>
    <scope>TISSUE SPECIFICITY</scope>
    <scope>INTERACTION WITH RBL; SDG14 AND SDG16</scope>
    <scope>SUBCELLULAR LOCATION</scope>
</reference>
<reference key="5">
    <citation type="journal article" date="2012" name="PLoS Genet.">
        <title>ATX1-generated H3K4me3 is required for efficient elongation of transcription, not initiation, at ATX1-regulated genes.</title>
        <authorList>
            <person name="Ding Y."/>
            <person name="Ndamukong I."/>
            <person name="Xu Z."/>
            <person name="Lapko H."/>
            <person name="Fromm M."/>
            <person name="Avramova Z."/>
        </authorList>
    </citation>
    <scope>FUNCTION</scope>
    <scope>DISRUPTION PHENOTYPE</scope>
    <scope>INTERACTION WITH ATX1</scope>
    <source>
        <strain>cv. Wassilewskija</strain>
    </source>
</reference>
<feature type="chain" id="PRO_0000431782" description="COMPASS-like H3K4 histone methylase component WDR5A">
    <location>
        <begin position="1"/>
        <end position="317"/>
    </location>
</feature>
<feature type="repeat" description="WD 1" evidence="1">
    <location>
        <begin position="22"/>
        <end position="61"/>
    </location>
</feature>
<feature type="repeat" description="WD 2" evidence="1">
    <location>
        <begin position="69"/>
        <end position="108"/>
    </location>
</feature>
<feature type="repeat" description="WD 3" evidence="1">
    <location>
        <begin position="111"/>
        <end position="152"/>
    </location>
</feature>
<feature type="repeat" description="WD 4" evidence="1">
    <location>
        <begin position="153"/>
        <end position="192"/>
    </location>
</feature>
<feature type="repeat" description="WD 5" evidence="1">
    <location>
        <begin position="196"/>
        <end position="235"/>
    </location>
</feature>
<feature type="repeat" description="WD 6" evidence="1">
    <location>
        <begin position="238"/>
        <end position="280"/>
    </location>
</feature>
<feature type="repeat" description="WD 7" evidence="1">
    <location>
        <begin position="283"/>
        <end position="317"/>
    </location>
</feature>
<accession>Q9M2Z2</accession>
<keyword id="KW-0489">Methyltransferase</keyword>
<keyword id="KW-0539">Nucleus</keyword>
<keyword id="KW-1185">Reference proteome</keyword>
<keyword id="KW-0677">Repeat</keyword>
<keyword id="KW-0808">Transferase</keyword>
<keyword id="KW-0853">WD repeat</keyword>
<organism evidence="8">
    <name type="scientific">Arabidopsis thaliana</name>
    <name type="common">Mouse-ear cress</name>
    <dbReference type="NCBI Taxonomy" id="3702"/>
    <lineage>
        <taxon>Eukaryota</taxon>
        <taxon>Viridiplantae</taxon>
        <taxon>Streptophyta</taxon>
        <taxon>Embryophyta</taxon>
        <taxon>Tracheophyta</taxon>
        <taxon>Spermatophyta</taxon>
        <taxon>Magnoliopsida</taxon>
        <taxon>eudicotyledons</taxon>
        <taxon>Gunneridae</taxon>
        <taxon>Pentapetalae</taxon>
        <taxon>rosids</taxon>
        <taxon>malvids</taxon>
        <taxon>Brassicales</taxon>
        <taxon>Brassicaceae</taxon>
        <taxon>Camelineae</taxon>
        <taxon>Arabidopsis</taxon>
    </lineage>
</organism>
<gene>
    <name evidence="5" type="primary">WDR5A</name>
    <name evidence="6" type="ordered locus">At3g49660</name>
    <name evidence="7" type="ORF">T16K5.10</name>
</gene>
<evidence type="ECO:0000255" key="1"/>
<evidence type="ECO:0000269" key="2">
    <source>
    </source>
</evidence>
<evidence type="ECO:0000269" key="3">
    <source>
    </source>
</evidence>
<evidence type="ECO:0000269" key="4">
    <source>
    </source>
</evidence>
<evidence type="ECO:0000303" key="5">
    <source>
    </source>
</evidence>
<evidence type="ECO:0000312" key="6">
    <source>
        <dbReference type="Araport" id="AT3G49660"/>
    </source>
</evidence>
<evidence type="ECO:0000312" key="7">
    <source>
        <dbReference type="EMBL" id="CAB66904.1"/>
    </source>
</evidence>
<evidence type="ECO:0000312" key="8">
    <source>
        <dbReference type="Proteomes" id="UP000006548"/>
    </source>
</evidence>
<proteinExistence type="evidence at protein level"/>
<dbReference type="EMBL" id="AL132965">
    <property type="protein sequence ID" value="CAB66904.1"/>
    <property type="molecule type" value="Genomic_DNA"/>
</dbReference>
<dbReference type="EMBL" id="CP002686">
    <property type="protein sequence ID" value="AEE78573.1"/>
    <property type="molecule type" value="Genomic_DNA"/>
</dbReference>
<dbReference type="PIR" id="T46032">
    <property type="entry name" value="T46032"/>
</dbReference>
<dbReference type="RefSeq" id="NP_190535.1">
    <property type="nucleotide sequence ID" value="NM_114826.4"/>
</dbReference>
<dbReference type="SMR" id="Q9M2Z2"/>
<dbReference type="FunCoup" id="Q9M2Z2">
    <property type="interactions" value="86"/>
</dbReference>
<dbReference type="STRING" id="3702.Q9M2Z2"/>
<dbReference type="PaxDb" id="3702-AT3G49660.1"/>
<dbReference type="ProteomicsDB" id="242573"/>
<dbReference type="EnsemblPlants" id="AT3G49660.1">
    <property type="protein sequence ID" value="AT3G49660.1"/>
    <property type="gene ID" value="AT3G49660"/>
</dbReference>
<dbReference type="GeneID" id="824128"/>
<dbReference type="Gramene" id="AT3G49660.1">
    <property type="protein sequence ID" value="AT3G49660.1"/>
    <property type="gene ID" value="AT3G49660"/>
</dbReference>
<dbReference type="KEGG" id="ath:AT3G49660"/>
<dbReference type="Araport" id="AT3G49660"/>
<dbReference type="TAIR" id="AT3G49660">
    <property type="gene designation" value="WDR5A"/>
</dbReference>
<dbReference type="eggNOG" id="KOG0266">
    <property type="taxonomic scope" value="Eukaryota"/>
</dbReference>
<dbReference type="HOGENOM" id="CLU_000288_57_1_1"/>
<dbReference type="InParanoid" id="Q9M2Z2"/>
<dbReference type="OMA" id="CKGHDTA"/>
<dbReference type="OrthoDB" id="674604at2759"/>
<dbReference type="PhylomeDB" id="Q9M2Z2"/>
<dbReference type="PRO" id="PR:Q9M2Z2"/>
<dbReference type="Proteomes" id="UP000006548">
    <property type="component" value="Chromosome 3"/>
</dbReference>
<dbReference type="ExpressionAtlas" id="Q9M2Z2">
    <property type="expression patterns" value="baseline and differential"/>
</dbReference>
<dbReference type="GO" id="GO:0005634">
    <property type="term" value="C:nucleus"/>
    <property type="evidence" value="ECO:0000314"/>
    <property type="project" value="TAIR"/>
</dbReference>
<dbReference type="GO" id="GO:0048188">
    <property type="term" value="C:Set1C/COMPASS complex"/>
    <property type="evidence" value="ECO:0000353"/>
    <property type="project" value="TAIR"/>
</dbReference>
<dbReference type="GO" id="GO:0042393">
    <property type="term" value="F:histone binding"/>
    <property type="evidence" value="ECO:0000314"/>
    <property type="project" value="TAIR"/>
</dbReference>
<dbReference type="GO" id="GO:0008168">
    <property type="term" value="F:methyltransferase activity"/>
    <property type="evidence" value="ECO:0007669"/>
    <property type="project" value="UniProtKB-KW"/>
</dbReference>
<dbReference type="GO" id="GO:0032259">
    <property type="term" value="P:methylation"/>
    <property type="evidence" value="ECO:0007669"/>
    <property type="project" value="UniProtKB-KW"/>
</dbReference>
<dbReference type="GO" id="GO:0010228">
    <property type="term" value="P:vegetative to reproductive phase transition of meristem"/>
    <property type="evidence" value="ECO:0000315"/>
    <property type="project" value="TAIR"/>
</dbReference>
<dbReference type="CDD" id="cd00200">
    <property type="entry name" value="WD40"/>
    <property type="match status" value="1"/>
</dbReference>
<dbReference type="FunFam" id="2.130.10.10:FF:000228">
    <property type="entry name" value="COMPASS-like H3K4 histone methylase component WDR5A"/>
    <property type="match status" value="1"/>
</dbReference>
<dbReference type="Gene3D" id="2.130.10.10">
    <property type="entry name" value="YVTN repeat-like/Quinoprotein amine dehydrogenase"/>
    <property type="match status" value="1"/>
</dbReference>
<dbReference type="InterPro" id="IPR020472">
    <property type="entry name" value="G-protein_beta_WD-40_rep"/>
</dbReference>
<dbReference type="InterPro" id="IPR015943">
    <property type="entry name" value="WD40/YVTN_repeat-like_dom_sf"/>
</dbReference>
<dbReference type="InterPro" id="IPR019775">
    <property type="entry name" value="WD40_repeat_CS"/>
</dbReference>
<dbReference type="InterPro" id="IPR036322">
    <property type="entry name" value="WD40_repeat_dom_sf"/>
</dbReference>
<dbReference type="InterPro" id="IPR001680">
    <property type="entry name" value="WD40_rpt"/>
</dbReference>
<dbReference type="PANTHER" id="PTHR22847:SF637">
    <property type="entry name" value="WD REPEAT DOMAIN 5B"/>
    <property type="match status" value="1"/>
</dbReference>
<dbReference type="PANTHER" id="PTHR22847">
    <property type="entry name" value="WD40 REPEAT PROTEIN"/>
    <property type="match status" value="1"/>
</dbReference>
<dbReference type="Pfam" id="PF25175">
    <property type="entry name" value="Beta-prop_WDR5"/>
    <property type="match status" value="1"/>
</dbReference>
<dbReference type="PIRSF" id="PIRSF002394">
    <property type="entry name" value="GN-bd_beta"/>
    <property type="match status" value="1"/>
</dbReference>
<dbReference type="PRINTS" id="PR00320">
    <property type="entry name" value="GPROTEINBRPT"/>
</dbReference>
<dbReference type="SMART" id="SM00320">
    <property type="entry name" value="WD40"/>
    <property type="match status" value="7"/>
</dbReference>
<dbReference type="SUPFAM" id="SSF50978">
    <property type="entry name" value="WD40 repeat-like"/>
    <property type="match status" value="1"/>
</dbReference>
<dbReference type="PROSITE" id="PS00678">
    <property type="entry name" value="WD_REPEATS_1"/>
    <property type="match status" value="4"/>
</dbReference>
<dbReference type="PROSITE" id="PS50082">
    <property type="entry name" value="WD_REPEATS_2"/>
    <property type="match status" value="7"/>
</dbReference>
<dbReference type="PROSITE" id="PS50294">
    <property type="entry name" value="WD_REPEATS_REGION"/>
    <property type="match status" value="1"/>
</dbReference>